<comment type="function">
    <text evidence="1">Catalyzes the methyl esterification of L-isoaspartyl residues in peptides and proteins that result from spontaneous decomposition of normal L-aspartyl and L-asparaginyl residues. It plays a role in the repair and/or degradation of damaged proteins.</text>
</comment>
<comment type="catalytic activity">
    <reaction evidence="1">
        <text>[protein]-L-isoaspartate + S-adenosyl-L-methionine = [protein]-L-isoaspartate alpha-methyl ester + S-adenosyl-L-homocysteine</text>
        <dbReference type="Rhea" id="RHEA:12705"/>
        <dbReference type="Rhea" id="RHEA-COMP:12143"/>
        <dbReference type="Rhea" id="RHEA-COMP:12144"/>
        <dbReference type="ChEBI" id="CHEBI:57856"/>
        <dbReference type="ChEBI" id="CHEBI:59789"/>
        <dbReference type="ChEBI" id="CHEBI:90596"/>
        <dbReference type="ChEBI" id="CHEBI:90598"/>
        <dbReference type="EC" id="2.1.1.77"/>
    </reaction>
</comment>
<comment type="subcellular location">
    <subcellularLocation>
        <location evidence="1">Cytoplasm</location>
    </subcellularLocation>
</comment>
<comment type="similarity">
    <text evidence="1">Belongs to the methyltransferase superfamily. L-isoaspartyl/D-aspartyl protein methyltransferase family.</text>
</comment>
<dbReference type="EC" id="2.1.1.77" evidence="1"/>
<dbReference type="EMBL" id="AP008232">
    <property type="protein sequence ID" value="BAE73804.1"/>
    <property type="molecule type" value="Genomic_DNA"/>
</dbReference>
<dbReference type="RefSeq" id="WP_011410502.1">
    <property type="nucleotide sequence ID" value="NC_007712.1"/>
</dbReference>
<dbReference type="SMR" id="Q2NVM1"/>
<dbReference type="STRING" id="343509.SG0529"/>
<dbReference type="KEGG" id="sgl:SG0529"/>
<dbReference type="eggNOG" id="COG2518">
    <property type="taxonomic scope" value="Bacteria"/>
</dbReference>
<dbReference type="HOGENOM" id="CLU_055432_2_0_6"/>
<dbReference type="OrthoDB" id="9810066at2"/>
<dbReference type="BioCyc" id="SGLO343509:SGP1_RS04670-MONOMER"/>
<dbReference type="Proteomes" id="UP000001932">
    <property type="component" value="Chromosome"/>
</dbReference>
<dbReference type="GO" id="GO:0005737">
    <property type="term" value="C:cytoplasm"/>
    <property type="evidence" value="ECO:0007669"/>
    <property type="project" value="UniProtKB-SubCell"/>
</dbReference>
<dbReference type="GO" id="GO:0004719">
    <property type="term" value="F:protein-L-isoaspartate (D-aspartate) O-methyltransferase activity"/>
    <property type="evidence" value="ECO:0007669"/>
    <property type="project" value="UniProtKB-UniRule"/>
</dbReference>
<dbReference type="GO" id="GO:0032259">
    <property type="term" value="P:methylation"/>
    <property type="evidence" value="ECO:0007669"/>
    <property type="project" value="UniProtKB-KW"/>
</dbReference>
<dbReference type="GO" id="GO:0036211">
    <property type="term" value="P:protein modification process"/>
    <property type="evidence" value="ECO:0007669"/>
    <property type="project" value="UniProtKB-UniRule"/>
</dbReference>
<dbReference type="GO" id="GO:0030091">
    <property type="term" value="P:protein repair"/>
    <property type="evidence" value="ECO:0007669"/>
    <property type="project" value="UniProtKB-UniRule"/>
</dbReference>
<dbReference type="CDD" id="cd02440">
    <property type="entry name" value="AdoMet_MTases"/>
    <property type="match status" value="1"/>
</dbReference>
<dbReference type="FunFam" id="3.40.50.150:FF:000010">
    <property type="entry name" value="Protein-L-isoaspartate O-methyltransferase"/>
    <property type="match status" value="1"/>
</dbReference>
<dbReference type="Gene3D" id="3.40.50.150">
    <property type="entry name" value="Vaccinia Virus protein VP39"/>
    <property type="match status" value="1"/>
</dbReference>
<dbReference type="HAMAP" id="MF_00090">
    <property type="entry name" value="PIMT"/>
    <property type="match status" value="1"/>
</dbReference>
<dbReference type="InterPro" id="IPR000682">
    <property type="entry name" value="PCMT"/>
</dbReference>
<dbReference type="InterPro" id="IPR029063">
    <property type="entry name" value="SAM-dependent_MTases_sf"/>
</dbReference>
<dbReference type="NCBIfam" id="TIGR00080">
    <property type="entry name" value="pimt"/>
    <property type="match status" value="1"/>
</dbReference>
<dbReference type="NCBIfam" id="NF001453">
    <property type="entry name" value="PRK00312.1"/>
    <property type="match status" value="1"/>
</dbReference>
<dbReference type="PANTHER" id="PTHR11579">
    <property type="entry name" value="PROTEIN-L-ISOASPARTATE O-METHYLTRANSFERASE"/>
    <property type="match status" value="1"/>
</dbReference>
<dbReference type="PANTHER" id="PTHR11579:SF0">
    <property type="entry name" value="PROTEIN-L-ISOASPARTATE(D-ASPARTATE) O-METHYLTRANSFERASE"/>
    <property type="match status" value="1"/>
</dbReference>
<dbReference type="Pfam" id="PF01135">
    <property type="entry name" value="PCMT"/>
    <property type="match status" value="1"/>
</dbReference>
<dbReference type="SUPFAM" id="SSF53335">
    <property type="entry name" value="S-adenosyl-L-methionine-dependent methyltransferases"/>
    <property type="match status" value="1"/>
</dbReference>
<dbReference type="PROSITE" id="PS01279">
    <property type="entry name" value="PCMT"/>
    <property type="match status" value="1"/>
</dbReference>
<sequence length="208" mass="23338">MVDVRTQTLLAQLRQQGIRDERLLQAMEAVPREHFIDEAFEHKAYDNTALPIGLGQTISQPYIVARMTELLALWPESRVLEIGTGSGYQTAILAHLVKHVCSVERIKKLQWQAKRRLKLLDLHNISTRHGDGWQGWLSRGPFDAIIVTAAPPEIPQALMAQLDEGGVMVLPVGDEQQHLTRVRRKGGEFVVDTVEAVRFVPLVKGELA</sequence>
<evidence type="ECO:0000255" key="1">
    <source>
        <dbReference type="HAMAP-Rule" id="MF_00090"/>
    </source>
</evidence>
<keyword id="KW-0963">Cytoplasm</keyword>
<keyword id="KW-0489">Methyltransferase</keyword>
<keyword id="KW-0949">S-adenosyl-L-methionine</keyword>
<keyword id="KW-0808">Transferase</keyword>
<protein>
    <recommendedName>
        <fullName evidence="1">Protein-L-isoaspartate O-methyltransferase</fullName>
        <ecNumber evidence="1">2.1.1.77</ecNumber>
    </recommendedName>
    <alternativeName>
        <fullName evidence="1">L-isoaspartyl protein carboxyl methyltransferase</fullName>
    </alternativeName>
    <alternativeName>
        <fullName evidence="1">Protein L-isoaspartyl methyltransferase</fullName>
    </alternativeName>
    <alternativeName>
        <fullName evidence="1">Protein-beta-aspartate methyltransferase</fullName>
        <shortName evidence="1">PIMT</shortName>
    </alternativeName>
</protein>
<proteinExistence type="inferred from homology"/>
<organism>
    <name type="scientific">Sodalis glossinidius (strain morsitans)</name>
    <dbReference type="NCBI Taxonomy" id="343509"/>
    <lineage>
        <taxon>Bacteria</taxon>
        <taxon>Pseudomonadati</taxon>
        <taxon>Pseudomonadota</taxon>
        <taxon>Gammaproteobacteria</taxon>
        <taxon>Enterobacterales</taxon>
        <taxon>Bruguierivoracaceae</taxon>
        <taxon>Sodalis</taxon>
    </lineage>
</organism>
<feature type="chain" id="PRO_1000004829" description="Protein-L-isoaspartate O-methyltransferase">
    <location>
        <begin position="1"/>
        <end position="208"/>
    </location>
</feature>
<feature type="active site" evidence="1">
    <location>
        <position position="59"/>
    </location>
</feature>
<accession>Q2NVM1</accession>
<reference key="1">
    <citation type="journal article" date="2006" name="Genome Res.">
        <title>Massive genome erosion and functional adaptations provide insights into the symbiotic lifestyle of Sodalis glossinidius in the tsetse host.</title>
        <authorList>
            <person name="Toh H."/>
            <person name="Weiss B.L."/>
            <person name="Perkin S.A.H."/>
            <person name="Yamashita A."/>
            <person name="Oshima K."/>
            <person name="Hattori M."/>
            <person name="Aksoy S."/>
        </authorList>
    </citation>
    <scope>NUCLEOTIDE SEQUENCE [LARGE SCALE GENOMIC DNA]</scope>
    <source>
        <strain>morsitans</strain>
    </source>
</reference>
<gene>
    <name evidence="1" type="primary">pcm</name>
    <name type="ordered locus">SG0529</name>
</gene>
<name>PIMT_SODGM</name>